<reference evidence="6" key="1">
    <citation type="journal article" date="1998" name="Science">
        <title>Genome sequence of the nematode C. elegans: a platform for investigating biology.</title>
        <authorList>
            <consortium name="The C. elegans sequencing consortium"/>
        </authorList>
    </citation>
    <scope>NUCLEOTIDE SEQUENCE [LARGE SCALE GENOMIC DNA]</scope>
    <source>
        <strain evidence="6">Bristol N2</strain>
    </source>
</reference>
<reference evidence="5" key="2">
    <citation type="journal article" date="2011" name="Development">
        <title>Regulation of C. elegans presynaptic differentiation and neurite branching via a novel signaling pathway initiated by SAM-10.</title>
        <authorList>
            <person name="Zheng Q."/>
            <person name="Schaefer A.M."/>
            <person name="Nonet M.L."/>
        </authorList>
    </citation>
    <scope>FUNCTION</scope>
</reference>
<protein>
    <recommendedName>
        <fullName evidence="5">Serine/threonine-protein kinase prk-2</fullName>
        <ecNumber evidence="1">2.7.11.1</ecNumber>
    </recommendedName>
    <alternativeName>
        <fullName evidence="7">PIM-related kinase 2</fullName>
    </alternativeName>
</protein>
<evidence type="ECO:0000250" key="1">
    <source>
        <dbReference type="UniProtKB" id="P11309"/>
    </source>
</evidence>
<evidence type="ECO:0000255" key="2">
    <source>
        <dbReference type="PROSITE-ProRule" id="PRU00159"/>
    </source>
</evidence>
<evidence type="ECO:0000256" key="3">
    <source>
        <dbReference type="SAM" id="MobiDB-lite"/>
    </source>
</evidence>
<evidence type="ECO:0000269" key="4">
    <source>
    </source>
</evidence>
<evidence type="ECO:0000305" key="5"/>
<evidence type="ECO:0000312" key="6">
    <source>
        <dbReference type="Proteomes" id="UP000001940"/>
    </source>
</evidence>
<evidence type="ECO:0000312" key="7">
    <source>
        <dbReference type="WormBase" id="F45H7.4"/>
    </source>
</evidence>
<name>PRK2_CAEEL</name>
<gene>
    <name evidence="7" type="primary">prk-2</name>
    <name evidence="7" type="ORF">F45H7.4</name>
</gene>
<organism evidence="6">
    <name type="scientific">Caenorhabditis elegans</name>
    <dbReference type="NCBI Taxonomy" id="6239"/>
    <lineage>
        <taxon>Eukaryota</taxon>
        <taxon>Metazoa</taxon>
        <taxon>Ecdysozoa</taxon>
        <taxon>Nematoda</taxon>
        <taxon>Chromadorea</taxon>
        <taxon>Rhabditida</taxon>
        <taxon>Rhabditina</taxon>
        <taxon>Rhabditomorpha</taxon>
        <taxon>Rhabditoidea</taxon>
        <taxon>Rhabditidae</taxon>
        <taxon>Peloderinae</taxon>
        <taxon>Caenorhabditis</taxon>
    </lineage>
</organism>
<accession>Q20443</accession>
<proteinExistence type="inferred from homology"/>
<sequence>MKKLASLQFFNLKLLLNGESSRGFSKFKKNYKLKAELGRGGFGVVYRAVRTCDNALVAVKFIERSNVKEWARINGEQVPMEICMLAKCSKVRGVIRLLDWYSIPEGFLIVMERPYPCIDMFDFIKGQGKISEDMARFLFRQIAVTVHECVQNRVLHRDLKDENIVIDLVTGSTKLIDFGAATVLRRSQYSDFQGTRLYCPPEWFLHSLYLGREAAVWSLGVLLYNSLNGRLPFRNEKDICTAHLLGPLPFFVPVSAEVKDLISKCLTFDPFQRCSLEAILNHPWVKQQTLSWDALTKNKVQKKTSESSDDHHSETLGDHSETEEDRSPPTSSVSQQPGSADEGVGLSASSSNTHNQKKPNHKEFRMAKTSLLAPPTSIEMKAAVQASKTPTQFNVHTALKNQRQIKKHHSPQPPNSTVLTALRRAMSREAQNRISGVFSQD</sequence>
<feature type="chain" id="PRO_0000432384" description="Serine/threonine-protein kinase prk-2">
    <location>
        <begin position="1"/>
        <end position="441"/>
    </location>
</feature>
<feature type="domain" description="Protein kinase" evidence="2">
    <location>
        <begin position="31"/>
        <end position="285"/>
    </location>
</feature>
<feature type="region of interest" description="Disordered" evidence="3">
    <location>
        <begin position="301"/>
        <end position="364"/>
    </location>
</feature>
<feature type="compositionally biased region" description="Basic and acidic residues" evidence="3">
    <location>
        <begin position="303"/>
        <end position="320"/>
    </location>
</feature>
<feature type="compositionally biased region" description="Polar residues" evidence="3">
    <location>
        <begin position="328"/>
        <end position="338"/>
    </location>
</feature>
<feature type="active site" description="Proton acceptor" evidence="2">
    <location>
        <position position="158"/>
    </location>
</feature>
<feature type="binding site" evidence="2">
    <location>
        <begin position="37"/>
        <end position="45"/>
    </location>
    <ligand>
        <name>ATP</name>
        <dbReference type="ChEBI" id="CHEBI:30616"/>
    </ligand>
</feature>
<feature type="binding site" evidence="2">
    <location>
        <position position="60"/>
    </location>
    <ligand>
        <name>ATP</name>
        <dbReference type="ChEBI" id="CHEBI:30616"/>
    </ligand>
</feature>
<dbReference type="EC" id="2.7.11.1" evidence="1"/>
<dbReference type="EMBL" id="Z34800">
    <property type="protein sequence ID" value="CAA84323.2"/>
    <property type="molecule type" value="Genomic_DNA"/>
</dbReference>
<dbReference type="PIR" id="T22255">
    <property type="entry name" value="T22255"/>
</dbReference>
<dbReference type="RefSeq" id="NP_497696.2">
    <property type="nucleotide sequence ID" value="NM_065295.5"/>
</dbReference>
<dbReference type="SMR" id="Q20443"/>
<dbReference type="FunCoup" id="Q20443">
    <property type="interactions" value="629"/>
</dbReference>
<dbReference type="STRING" id="6239.F45H7.4.2"/>
<dbReference type="PaxDb" id="6239-F45H7.4.1"/>
<dbReference type="EnsemblMetazoa" id="F45H7.4.1">
    <property type="protein sequence ID" value="F45H7.4.1"/>
    <property type="gene ID" value="WBGene00004183"/>
</dbReference>
<dbReference type="EnsemblMetazoa" id="F45H7.4.2">
    <property type="protein sequence ID" value="F45H7.4.2"/>
    <property type="gene ID" value="WBGene00004183"/>
</dbReference>
<dbReference type="GeneID" id="175437"/>
<dbReference type="KEGG" id="cel:CELE_F45H7.4"/>
<dbReference type="AGR" id="WB:WBGene00004183"/>
<dbReference type="CTD" id="175437"/>
<dbReference type="WormBase" id="F45H7.4">
    <property type="protein sequence ID" value="CE31517"/>
    <property type="gene ID" value="WBGene00004183"/>
    <property type="gene designation" value="prk-2"/>
</dbReference>
<dbReference type="eggNOG" id="KOG0583">
    <property type="taxonomic scope" value="Eukaryota"/>
</dbReference>
<dbReference type="GeneTree" id="ENSGT00940000163427"/>
<dbReference type="HOGENOM" id="CLU_000288_63_0_1"/>
<dbReference type="InParanoid" id="Q20443"/>
<dbReference type="OMA" id="WFLHSLY"/>
<dbReference type="OrthoDB" id="193931at2759"/>
<dbReference type="PhylomeDB" id="Q20443"/>
<dbReference type="PRO" id="PR:Q20443"/>
<dbReference type="Proteomes" id="UP000001940">
    <property type="component" value="Chromosome III"/>
</dbReference>
<dbReference type="Bgee" id="WBGene00004183">
    <property type="expression patterns" value="Expressed in larva and 3 other cell types or tissues"/>
</dbReference>
<dbReference type="GO" id="GO:0005737">
    <property type="term" value="C:cytoplasm"/>
    <property type="evidence" value="ECO:0000318"/>
    <property type="project" value="GO_Central"/>
</dbReference>
<dbReference type="GO" id="GO:0005524">
    <property type="term" value="F:ATP binding"/>
    <property type="evidence" value="ECO:0007669"/>
    <property type="project" value="UniProtKB-KW"/>
</dbReference>
<dbReference type="GO" id="GO:0106310">
    <property type="term" value="F:protein serine kinase activity"/>
    <property type="evidence" value="ECO:0007669"/>
    <property type="project" value="RHEA"/>
</dbReference>
<dbReference type="GO" id="GO:0004674">
    <property type="term" value="F:protein serine/threonine kinase activity"/>
    <property type="evidence" value="ECO:0000318"/>
    <property type="project" value="GO_Central"/>
</dbReference>
<dbReference type="GO" id="GO:0043066">
    <property type="term" value="P:negative regulation of apoptotic process"/>
    <property type="evidence" value="ECO:0000318"/>
    <property type="project" value="GO_Central"/>
</dbReference>
<dbReference type="GO" id="GO:0007399">
    <property type="term" value="P:nervous system development"/>
    <property type="evidence" value="ECO:0007669"/>
    <property type="project" value="UniProtKB-KW"/>
</dbReference>
<dbReference type="GO" id="GO:1904263">
    <property type="term" value="P:positive regulation of TORC1 signaling"/>
    <property type="evidence" value="ECO:0000318"/>
    <property type="project" value="GO_Central"/>
</dbReference>
<dbReference type="GO" id="GO:0007346">
    <property type="term" value="P:regulation of mitotic cell cycle"/>
    <property type="evidence" value="ECO:0000318"/>
    <property type="project" value="GO_Central"/>
</dbReference>
<dbReference type="GO" id="GO:0051963">
    <property type="term" value="P:regulation of synapse assembly"/>
    <property type="evidence" value="ECO:0000315"/>
    <property type="project" value="UniProtKB"/>
</dbReference>
<dbReference type="CDD" id="cd14005">
    <property type="entry name" value="STKc_PIM"/>
    <property type="match status" value="1"/>
</dbReference>
<dbReference type="FunFam" id="1.10.510.10:FF:000708">
    <property type="entry name" value="serine/threonine-protein kinase par-1-like"/>
    <property type="match status" value="1"/>
</dbReference>
<dbReference type="FunFam" id="3.30.200.20:FF:000547">
    <property type="entry name" value="Serine/threonine-protein kinase prk-2"/>
    <property type="match status" value="1"/>
</dbReference>
<dbReference type="Gene3D" id="3.30.200.20">
    <property type="entry name" value="Phosphorylase Kinase, domain 1"/>
    <property type="match status" value="1"/>
</dbReference>
<dbReference type="Gene3D" id="1.10.510.10">
    <property type="entry name" value="Transferase(Phosphotransferase) domain 1"/>
    <property type="match status" value="1"/>
</dbReference>
<dbReference type="InterPro" id="IPR011009">
    <property type="entry name" value="Kinase-like_dom_sf"/>
</dbReference>
<dbReference type="InterPro" id="IPR051138">
    <property type="entry name" value="PIM_Ser/Thr_kinase"/>
</dbReference>
<dbReference type="InterPro" id="IPR000719">
    <property type="entry name" value="Prot_kinase_dom"/>
</dbReference>
<dbReference type="InterPro" id="IPR017441">
    <property type="entry name" value="Protein_kinase_ATP_BS"/>
</dbReference>
<dbReference type="InterPro" id="IPR008271">
    <property type="entry name" value="Ser/Thr_kinase_AS"/>
</dbReference>
<dbReference type="PANTHER" id="PTHR22984">
    <property type="entry name" value="SERINE/THREONINE-PROTEIN KINASE PIM"/>
    <property type="match status" value="1"/>
</dbReference>
<dbReference type="PANTHER" id="PTHR22984:SF29">
    <property type="entry name" value="SERINE_THREONINE-PROTEIN KINASE PIM-1"/>
    <property type="match status" value="1"/>
</dbReference>
<dbReference type="Pfam" id="PF00069">
    <property type="entry name" value="Pkinase"/>
    <property type="match status" value="1"/>
</dbReference>
<dbReference type="SMART" id="SM00220">
    <property type="entry name" value="S_TKc"/>
    <property type="match status" value="1"/>
</dbReference>
<dbReference type="SUPFAM" id="SSF56112">
    <property type="entry name" value="Protein kinase-like (PK-like)"/>
    <property type="match status" value="1"/>
</dbReference>
<dbReference type="PROSITE" id="PS00107">
    <property type="entry name" value="PROTEIN_KINASE_ATP"/>
    <property type="match status" value="1"/>
</dbReference>
<dbReference type="PROSITE" id="PS50011">
    <property type="entry name" value="PROTEIN_KINASE_DOM"/>
    <property type="match status" value="1"/>
</dbReference>
<dbReference type="PROSITE" id="PS00108">
    <property type="entry name" value="PROTEIN_KINASE_ST"/>
    <property type="match status" value="1"/>
</dbReference>
<comment type="function">
    <text evidence="4">Involved in the negative regulation of synaptic differentiation in PLM neurons.</text>
</comment>
<comment type="catalytic activity">
    <reaction evidence="1">
        <text>L-seryl-[protein] + ATP = O-phospho-L-seryl-[protein] + ADP + H(+)</text>
        <dbReference type="Rhea" id="RHEA:17989"/>
        <dbReference type="Rhea" id="RHEA-COMP:9863"/>
        <dbReference type="Rhea" id="RHEA-COMP:11604"/>
        <dbReference type="ChEBI" id="CHEBI:15378"/>
        <dbReference type="ChEBI" id="CHEBI:29999"/>
        <dbReference type="ChEBI" id="CHEBI:30616"/>
        <dbReference type="ChEBI" id="CHEBI:83421"/>
        <dbReference type="ChEBI" id="CHEBI:456216"/>
        <dbReference type="EC" id="2.7.11.1"/>
    </reaction>
</comment>
<comment type="catalytic activity">
    <reaction evidence="1">
        <text>L-threonyl-[protein] + ATP = O-phospho-L-threonyl-[protein] + ADP + H(+)</text>
        <dbReference type="Rhea" id="RHEA:46608"/>
        <dbReference type="Rhea" id="RHEA-COMP:11060"/>
        <dbReference type="Rhea" id="RHEA-COMP:11605"/>
        <dbReference type="ChEBI" id="CHEBI:15378"/>
        <dbReference type="ChEBI" id="CHEBI:30013"/>
        <dbReference type="ChEBI" id="CHEBI:30616"/>
        <dbReference type="ChEBI" id="CHEBI:61977"/>
        <dbReference type="ChEBI" id="CHEBI:456216"/>
        <dbReference type="EC" id="2.7.11.1"/>
    </reaction>
</comment>
<comment type="cofactor">
    <cofactor evidence="1">
        <name>Mg(2+)</name>
        <dbReference type="ChEBI" id="CHEBI:18420"/>
    </cofactor>
</comment>
<comment type="similarity">
    <text evidence="5">Belongs to the protein kinase superfamily. Ser/Thr protein kinase family. PIM subfamily.</text>
</comment>
<keyword id="KW-0067">ATP-binding</keyword>
<keyword id="KW-0418">Kinase</keyword>
<keyword id="KW-0460">Magnesium</keyword>
<keyword id="KW-0524">Neurogenesis</keyword>
<keyword id="KW-0547">Nucleotide-binding</keyword>
<keyword id="KW-1185">Reference proteome</keyword>
<keyword id="KW-0723">Serine/threonine-protein kinase</keyword>
<keyword id="KW-0808">Transferase</keyword>